<sequence length="474" mass="50664">MFIRSNRRAKIVATVGPASSSPAILRSLFLAGVDTFRLNFSHGSRDDHAAAYRHIRALEKELGTSIGILQDLQGPKIRIGVLHEGRLQLTKDAEIRFVCGTEPGRGLMDIPLPHREIFAAVKPGDDLLIDDGRVRVRALGVSDEFIDAKVIVAGPISNRKGVNLPGTVLDISPLTPKDRKDLEFGLELGVDWIALSFVQTARDMIEARSLVSDRAGLIAKIEKPSALDEIDDIVALSDAIMVARGDLGVEIPPEDVPGRQKELIRACRIAAKPVIVATQMLDSMVTSPTPTRAEASDVAGAIYDGADAVMLSAESATGAFPVETVEIMSRIIEKTEKHKFYRPILEATEPQIAHTPPHAVATAAADVALALKAPVIVAFTVSGTTASRISRARPPLPILALTPSEQTARQLGLMWGVVSLLSPTVDTYEQSVDRATQAAVQTGLAEKSDQIVVVTGFPFATAGSTNNLRVTQAG</sequence>
<evidence type="ECO:0000250" key="1"/>
<evidence type="ECO:0000250" key="2">
    <source>
        <dbReference type="UniProtKB" id="P14618"/>
    </source>
</evidence>
<evidence type="ECO:0000305" key="3"/>
<accession>P70789</accession>
<geneLocation type="plasmid">
    <name>pTrAB3</name>
</geneLocation>
<organism>
    <name type="scientific">Agrobacterium vitis</name>
    <name type="common">Rhizobium vitis</name>
    <dbReference type="NCBI Taxonomy" id="373"/>
    <lineage>
        <taxon>Bacteria</taxon>
        <taxon>Pseudomonadati</taxon>
        <taxon>Pseudomonadota</taxon>
        <taxon>Alphaproteobacteria</taxon>
        <taxon>Hyphomicrobiales</taxon>
        <taxon>Rhizobiaceae</taxon>
        <taxon>Rhizobium/Agrobacterium group</taxon>
        <taxon>Agrobacterium</taxon>
    </lineage>
</organism>
<reference key="1">
    <citation type="journal article" date="1996" name="Mol. Plant Microbe Interact.">
        <title>Characterization and distribution of tartrate utilization genes in the grapevine pathogen Agrobacterium vitis.</title>
        <authorList>
            <person name="Salomone J.-Y."/>
            <person name="Crouzet P."/>
            <person name="de Ruffray P."/>
            <person name="Otten L."/>
        </authorList>
    </citation>
    <scope>NUCLEOTIDE SEQUENCE [GENOMIC DNA]</scope>
    <source>
        <strain>AB3</strain>
    </source>
</reference>
<comment type="catalytic activity">
    <reaction>
        <text>pyruvate + ATP = phosphoenolpyruvate + ADP + H(+)</text>
        <dbReference type="Rhea" id="RHEA:18157"/>
        <dbReference type="ChEBI" id="CHEBI:15361"/>
        <dbReference type="ChEBI" id="CHEBI:15378"/>
        <dbReference type="ChEBI" id="CHEBI:30616"/>
        <dbReference type="ChEBI" id="CHEBI:58702"/>
        <dbReference type="ChEBI" id="CHEBI:456216"/>
        <dbReference type="EC" id="2.7.1.40"/>
    </reaction>
</comment>
<comment type="cofactor">
    <cofactor>
        <name>Mg(2+)</name>
        <dbReference type="ChEBI" id="CHEBI:18420"/>
    </cofactor>
</comment>
<comment type="cofactor">
    <cofactor>
        <name>K(+)</name>
        <dbReference type="ChEBI" id="CHEBI:29103"/>
    </cofactor>
</comment>
<comment type="pathway">
    <text>Carbohydrate degradation; glycolysis; pyruvate from D-glyceraldehyde 3-phosphate: step 5/5.</text>
</comment>
<comment type="subunit">
    <text evidence="1">Homotetramer.</text>
</comment>
<comment type="induction">
    <text>By tartrate.</text>
</comment>
<comment type="similarity">
    <text evidence="3">Belongs to the pyruvate kinase family.</text>
</comment>
<feature type="chain" id="PRO_0000112051" description="Pyruvate kinase">
    <location>
        <begin position="1"/>
        <end position="474"/>
    </location>
</feature>
<feature type="binding site" evidence="1">
    <location>
        <position position="37"/>
    </location>
    <ligand>
        <name>substrate</name>
    </ligand>
</feature>
<feature type="binding site" evidence="2">
    <location>
        <begin position="39"/>
        <end position="42"/>
    </location>
    <ligand>
        <name>ATP</name>
        <dbReference type="ChEBI" id="CHEBI:30616"/>
    </ligand>
</feature>
<feature type="binding site" evidence="1">
    <location>
        <position position="39"/>
    </location>
    <ligand>
        <name>K(+)</name>
        <dbReference type="ChEBI" id="CHEBI:29103"/>
    </ligand>
</feature>
<feature type="binding site" evidence="1">
    <location>
        <position position="41"/>
    </location>
    <ligand>
        <name>K(+)</name>
        <dbReference type="ChEBI" id="CHEBI:29103"/>
    </ligand>
</feature>
<feature type="binding site" evidence="1">
    <location>
        <position position="71"/>
    </location>
    <ligand>
        <name>K(+)</name>
        <dbReference type="ChEBI" id="CHEBI:29103"/>
    </ligand>
</feature>
<feature type="binding site" evidence="2">
    <location>
        <position position="78"/>
    </location>
    <ligand>
        <name>ATP</name>
        <dbReference type="ChEBI" id="CHEBI:30616"/>
    </ligand>
</feature>
<feature type="binding site" evidence="2">
    <location>
        <position position="160"/>
    </location>
    <ligand>
        <name>ATP</name>
        <dbReference type="ChEBI" id="CHEBI:30616"/>
    </ligand>
</feature>
<feature type="binding site" evidence="1">
    <location>
        <position position="222"/>
    </location>
    <ligand>
        <name>Mg(2+)</name>
        <dbReference type="ChEBI" id="CHEBI:18420"/>
    </ligand>
</feature>
<feature type="binding site" evidence="1">
    <location>
        <position position="245"/>
    </location>
    <ligand>
        <name>substrate</name>
    </ligand>
</feature>
<feature type="binding site" evidence="1">
    <location>
        <position position="246"/>
    </location>
    <ligand>
        <name>Mg(2+)</name>
        <dbReference type="ChEBI" id="CHEBI:18420"/>
    </ligand>
</feature>
<feature type="binding site" evidence="1">
    <location>
        <position position="246"/>
    </location>
    <ligand>
        <name>substrate</name>
    </ligand>
</feature>
<feature type="binding site" evidence="1">
    <location>
        <position position="278"/>
    </location>
    <ligand>
        <name>substrate</name>
    </ligand>
</feature>
<feature type="site" description="Transition state stabilizer" evidence="1">
    <location>
        <position position="220"/>
    </location>
</feature>
<keyword id="KW-0067">ATP-binding</keyword>
<keyword id="KW-0324">Glycolysis</keyword>
<keyword id="KW-0418">Kinase</keyword>
<keyword id="KW-0460">Magnesium</keyword>
<keyword id="KW-0479">Metal-binding</keyword>
<keyword id="KW-0547">Nucleotide-binding</keyword>
<keyword id="KW-0614">Plasmid</keyword>
<keyword id="KW-0630">Potassium</keyword>
<keyword id="KW-0670">Pyruvate</keyword>
<keyword id="KW-0808">Transferase</keyword>
<proteinExistence type="evidence at transcript level"/>
<protein>
    <recommendedName>
        <fullName>Pyruvate kinase</fullName>
        <shortName>PK</shortName>
        <ecNumber>2.7.1.40</ecNumber>
    </recommendedName>
</protein>
<name>KPYK1_AGRVI</name>
<gene>
    <name type="primary">ttuE</name>
</gene>
<dbReference type="EC" id="2.7.1.40"/>
<dbReference type="EMBL" id="U32375">
    <property type="protein sequence ID" value="AAB61625.1"/>
    <property type="molecule type" value="Genomic_DNA"/>
</dbReference>
<dbReference type="SMR" id="P70789"/>
<dbReference type="UniPathway" id="UPA00109">
    <property type="reaction ID" value="UER00188"/>
</dbReference>
<dbReference type="GO" id="GO:0005524">
    <property type="term" value="F:ATP binding"/>
    <property type="evidence" value="ECO:0007669"/>
    <property type="project" value="UniProtKB-KW"/>
</dbReference>
<dbReference type="GO" id="GO:0016301">
    <property type="term" value="F:kinase activity"/>
    <property type="evidence" value="ECO:0007669"/>
    <property type="project" value="UniProtKB-KW"/>
</dbReference>
<dbReference type="GO" id="GO:0000287">
    <property type="term" value="F:magnesium ion binding"/>
    <property type="evidence" value="ECO:0007669"/>
    <property type="project" value="InterPro"/>
</dbReference>
<dbReference type="GO" id="GO:0030955">
    <property type="term" value="F:potassium ion binding"/>
    <property type="evidence" value="ECO:0007669"/>
    <property type="project" value="InterPro"/>
</dbReference>
<dbReference type="GO" id="GO:0004743">
    <property type="term" value="F:pyruvate kinase activity"/>
    <property type="evidence" value="ECO:0007669"/>
    <property type="project" value="UniProtKB-EC"/>
</dbReference>
<dbReference type="Gene3D" id="3.20.20.60">
    <property type="entry name" value="Phosphoenolpyruvate-binding domains"/>
    <property type="match status" value="1"/>
</dbReference>
<dbReference type="Gene3D" id="2.40.33.10">
    <property type="entry name" value="PK beta-barrel domain-like"/>
    <property type="match status" value="1"/>
</dbReference>
<dbReference type="Gene3D" id="3.40.1380.20">
    <property type="entry name" value="Pyruvate kinase, C-terminal domain"/>
    <property type="match status" value="1"/>
</dbReference>
<dbReference type="InterPro" id="IPR001697">
    <property type="entry name" value="Pyr_Knase"/>
</dbReference>
<dbReference type="InterPro" id="IPR015813">
    <property type="entry name" value="Pyrv/PenolPyrv_kinase-like_dom"/>
</dbReference>
<dbReference type="InterPro" id="IPR040442">
    <property type="entry name" value="Pyrv_kinase-like_dom_sf"/>
</dbReference>
<dbReference type="InterPro" id="IPR011037">
    <property type="entry name" value="Pyrv_Knase-like_insert_dom_sf"/>
</dbReference>
<dbReference type="InterPro" id="IPR018209">
    <property type="entry name" value="Pyrv_Knase_AS"/>
</dbReference>
<dbReference type="InterPro" id="IPR015793">
    <property type="entry name" value="Pyrv_Knase_brl"/>
</dbReference>
<dbReference type="InterPro" id="IPR015795">
    <property type="entry name" value="Pyrv_Knase_C"/>
</dbReference>
<dbReference type="InterPro" id="IPR036918">
    <property type="entry name" value="Pyrv_Knase_C_sf"/>
</dbReference>
<dbReference type="InterPro" id="IPR015806">
    <property type="entry name" value="Pyrv_Knase_insert_dom_sf"/>
</dbReference>
<dbReference type="NCBIfam" id="NF004491">
    <property type="entry name" value="PRK05826.1"/>
    <property type="match status" value="1"/>
</dbReference>
<dbReference type="NCBIfam" id="NF004978">
    <property type="entry name" value="PRK06354.1"/>
    <property type="match status" value="1"/>
</dbReference>
<dbReference type="NCBIfam" id="TIGR01064">
    <property type="entry name" value="pyruv_kin"/>
    <property type="match status" value="1"/>
</dbReference>
<dbReference type="PANTHER" id="PTHR11817">
    <property type="entry name" value="PYRUVATE KINASE"/>
    <property type="match status" value="1"/>
</dbReference>
<dbReference type="Pfam" id="PF00224">
    <property type="entry name" value="PK"/>
    <property type="match status" value="1"/>
</dbReference>
<dbReference type="Pfam" id="PF02887">
    <property type="entry name" value="PK_C"/>
    <property type="match status" value="1"/>
</dbReference>
<dbReference type="PRINTS" id="PR01050">
    <property type="entry name" value="PYRUVTKNASE"/>
</dbReference>
<dbReference type="SUPFAM" id="SSF51621">
    <property type="entry name" value="Phosphoenolpyruvate/pyruvate domain"/>
    <property type="match status" value="1"/>
</dbReference>
<dbReference type="SUPFAM" id="SSF50800">
    <property type="entry name" value="PK beta-barrel domain-like"/>
    <property type="match status" value="1"/>
</dbReference>
<dbReference type="SUPFAM" id="SSF52935">
    <property type="entry name" value="PK C-terminal domain-like"/>
    <property type="match status" value="1"/>
</dbReference>
<dbReference type="PROSITE" id="PS00110">
    <property type="entry name" value="PYRUVATE_KINASE"/>
    <property type="match status" value="1"/>
</dbReference>